<keyword id="KW-0032">Aminotransferase</keyword>
<keyword id="KW-0963">Cytoplasm</keyword>
<keyword id="KW-0663">Pyridoxal phosphate</keyword>
<keyword id="KW-1185">Reference proteome</keyword>
<keyword id="KW-0808">Transferase</keyword>
<name>AATC2_BOVIN</name>
<reference key="1">
    <citation type="submission" date="2005-12" db="EMBL/GenBank/DDBJ databases">
        <authorList>
            <consortium name="NIH - Mammalian Gene Collection (MGC) project"/>
        </authorList>
    </citation>
    <scope>NUCLEOTIDE SEQUENCE [LARGE SCALE MRNA]</scope>
    <source>
        <strain>Crossbred X Angus</strain>
        <tissue>Liver</tissue>
    </source>
</reference>
<evidence type="ECO:0000250" key="1"/>
<evidence type="ECO:0000305" key="2"/>
<proteinExistence type="evidence at transcript level"/>
<dbReference type="EC" id="2.6.1.1"/>
<dbReference type="EMBL" id="BC111285">
    <property type="protein sequence ID" value="AAI11286.1"/>
    <property type="molecule type" value="mRNA"/>
</dbReference>
<dbReference type="RefSeq" id="NP_001033147.1">
    <property type="nucleotide sequence ID" value="NM_001038058.1"/>
</dbReference>
<dbReference type="SMR" id="Q2T9S8"/>
<dbReference type="FunCoup" id="Q2T9S8">
    <property type="interactions" value="163"/>
</dbReference>
<dbReference type="STRING" id="9913.ENSBTAP00000021864"/>
<dbReference type="PaxDb" id="9913-ENSBTAP00000021864"/>
<dbReference type="GeneID" id="507913"/>
<dbReference type="KEGG" id="bta:507913"/>
<dbReference type="CTD" id="137362"/>
<dbReference type="VEuPathDB" id="HostDB:ENSBTAG00000016446"/>
<dbReference type="eggNOG" id="KOG1412">
    <property type="taxonomic scope" value="Eukaryota"/>
</dbReference>
<dbReference type="HOGENOM" id="CLU_032440_1_2_1"/>
<dbReference type="InParanoid" id="Q2T9S8"/>
<dbReference type="OMA" id="MSMIKSK"/>
<dbReference type="OrthoDB" id="6752799at2759"/>
<dbReference type="TreeFam" id="TF314089"/>
<dbReference type="Proteomes" id="UP000009136">
    <property type="component" value="Chromosome 27"/>
</dbReference>
<dbReference type="Bgee" id="ENSBTAG00000016446">
    <property type="expression patterns" value="Expressed in spermatid and 58 other cell types or tissues"/>
</dbReference>
<dbReference type="GO" id="GO:0005829">
    <property type="term" value="C:cytosol"/>
    <property type="evidence" value="ECO:0000318"/>
    <property type="project" value="GO_Central"/>
</dbReference>
<dbReference type="GO" id="GO:0004069">
    <property type="term" value="F:L-aspartate:2-oxoglutarate aminotransferase activity"/>
    <property type="evidence" value="ECO:0000318"/>
    <property type="project" value="GO_Central"/>
</dbReference>
<dbReference type="GO" id="GO:0030170">
    <property type="term" value="F:pyridoxal phosphate binding"/>
    <property type="evidence" value="ECO:0007669"/>
    <property type="project" value="InterPro"/>
</dbReference>
<dbReference type="GO" id="GO:0006532">
    <property type="term" value="P:aspartate biosynthetic process"/>
    <property type="evidence" value="ECO:0000318"/>
    <property type="project" value="GO_Central"/>
</dbReference>
<dbReference type="CDD" id="cd00609">
    <property type="entry name" value="AAT_like"/>
    <property type="match status" value="1"/>
</dbReference>
<dbReference type="FunFam" id="3.40.640.10:FF:000098">
    <property type="entry name" value="Glutamic-oxaloacetic transaminase 1 like 1"/>
    <property type="match status" value="1"/>
</dbReference>
<dbReference type="Gene3D" id="3.90.1150.10">
    <property type="entry name" value="Aspartate Aminotransferase, domain 1"/>
    <property type="match status" value="1"/>
</dbReference>
<dbReference type="Gene3D" id="3.40.640.10">
    <property type="entry name" value="Type I PLP-dependent aspartate aminotransferase-like (Major domain)"/>
    <property type="match status" value="1"/>
</dbReference>
<dbReference type="InterPro" id="IPR004839">
    <property type="entry name" value="Aminotransferase_I/II_large"/>
</dbReference>
<dbReference type="InterPro" id="IPR000796">
    <property type="entry name" value="Asp_trans"/>
</dbReference>
<dbReference type="InterPro" id="IPR015424">
    <property type="entry name" value="PyrdxlP-dep_Trfase"/>
</dbReference>
<dbReference type="InterPro" id="IPR015421">
    <property type="entry name" value="PyrdxlP-dep_Trfase_major"/>
</dbReference>
<dbReference type="InterPro" id="IPR015422">
    <property type="entry name" value="PyrdxlP-dep_Trfase_small"/>
</dbReference>
<dbReference type="PANTHER" id="PTHR11879">
    <property type="entry name" value="ASPARTATE AMINOTRANSFERASE"/>
    <property type="match status" value="1"/>
</dbReference>
<dbReference type="PANTHER" id="PTHR11879:SF6">
    <property type="entry name" value="ASPARTATE AMINOTRANSFERASE, CYTOPLASMIC 2-RELATED"/>
    <property type="match status" value="1"/>
</dbReference>
<dbReference type="Pfam" id="PF00155">
    <property type="entry name" value="Aminotran_1_2"/>
    <property type="match status" value="1"/>
</dbReference>
<dbReference type="PRINTS" id="PR00799">
    <property type="entry name" value="TRANSAMINASE"/>
</dbReference>
<dbReference type="SUPFAM" id="SSF53383">
    <property type="entry name" value="PLP-dependent transferases"/>
    <property type="match status" value="1"/>
</dbReference>
<accession>Q2T9S8</accession>
<gene>
    <name type="primary">GOT1L1</name>
</gene>
<feature type="chain" id="PRO_0000332998" description="Putative aspartate aminotransferase, cytoplasmic 2">
    <location>
        <begin position="1"/>
        <end position="407"/>
    </location>
</feature>
<feature type="modified residue" description="N6-(pyridoxal phosphate)lysine" evidence="1">
    <location>
        <position position="249"/>
    </location>
</feature>
<sequence>MPTLSVFTDVPMAQKLEGSLLKTYKQDDNPNKMFLAYKVCMTSKGRPWVSSVVRKTRMQIAQDPSLNYEYTPVMGMKSFVQASLNLLFGKNSQVIVENRAGGVQTVGDSGAFQLGAQFLKSWCQSSQIVYIVSSQKEPHGLIFQDMGFTVYEHTFWDSAHLCLDPNMLLDVVKHAPHGCVFVIGSMGNCQLTPSQWTQLMTLMKSKEIFPFFDIPYQGLSTGDLEEDARFLHYFVSQGFEFFCSQSLSKNFGIYDEGVGTLVVVTLDNQLLLRVLSQLMNFARALWLNPPTTGARIITSVLCNPAMQGEWRQSLEGVVENVMMTKEKVKEKLRLLGTPGSWDHITEQKGSHSYLGLNSQQVEYLISEKHIYIPKNGRINFTCINSYNIDYITSSINEAVCFTKDSER</sequence>
<organism>
    <name type="scientific">Bos taurus</name>
    <name type="common">Bovine</name>
    <dbReference type="NCBI Taxonomy" id="9913"/>
    <lineage>
        <taxon>Eukaryota</taxon>
        <taxon>Metazoa</taxon>
        <taxon>Chordata</taxon>
        <taxon>Craniata</taxon>
        <taxon>Vertebrata</taxon>
        <taxon>Euteleostomi</taxon>
        <taxon>Mammalia</taxon>
        <taxon>Eutheria</taxon>
        <taxon>Laurasiatheria</taxon>
        <taxon>Artiodactyla</taxon>
        <taxon>Ruminantia</taxon>
        <taxon>Pecora</taxon>
        <taxon>Bovidae</taxon>
        <taxon>Bovinae</taxon>
        <taxon>Bos</taxon>
    </lineage>
</organism>
<comment type="catalytic activity">
    <reaction>
        <text>L-aspartate + 2-oxoglutarate = oxaloacetate + L-glutamate</text>
        <dbReference type="Rhea" id="RHEA:21824"/>
        <dbReference type="ChEBI" id="CHEBI:16452"/>
        <dbReference type="ChEBI" id="CHEBI:16810"/>
        <dbReference type="ChEBI" id="CHEBI:29985"/>
        <dbReference type="ChEBI" id="CHEBI:29991"/>
        <dbReference type="EC" id="2.6.1.1"/>
    </reaction>
</comment>
<comment type="cofactor">
    <cofactor evidence="1">
        <name>pyridoxal 5'-phosphate</name>
        <dbReference type="ChEBI" id="CHEBI:597326"/>
    </cofactor>
</comment>
<comment type="subunit">
    <text evidence="1">Homodimer.</text>
</comment>
<comment type="subcellular location">
    <subcellularLocation>
        <location evidence="1">Cytoplasm</location>
    </subcellularLocation>
</comment>
<comment type="miscellaneous">
    <text>In eukaryotes there are cytoplasmic, mitochondrial and chloroplastic isozymes.</text>
</comment>
<comment type="similarity">
    <text evidence="2">Belongs to the class-I pyridoxal-phosphate-dependent aminotransferase family.</text>
</comment>
<comment type="caution">
    <text evidence="2">The residues that bind the substrate in other aspartate aminotransferases are not conserved.</text>
</comment>
<protein>
    <recommendedName>
        <fullName>Putative aspartate aminotransferase, cytoplasmic 2</fullName>
        <ecNumber>2.6.1.1</ecNumber>
    </recommendedName>
    <alternativeName>
        <fullName>Glutamate oxaloacetate transaminase 1-like protein 1</fullName>
    </alternativeName>
    <alternativeName>
        <fullName>Transaminase A-like protein 1</fullName>
    </alternativeName>
</protein>